<dbReference type="EMBL" id="CP000947">
    <property type="protein sequence ID" value="ACA31340.1"/>
    <property type="molecule type" value="Genomic_DNA"/>
</dbReference>
<dbReference type="RefSeq" id="WP_012340717.1">
    <property type="nucleotide sequence ID" value="NC_010519.1"/>
</dbReference>
<dbReference type="SMR" id="B0UVL9"/>
<dbReference type="STRING" id="228400.HSM_0158"/>
<dbReference type="GeneID" id="31486436"/>
<dbReference type="KEGG" id="hsm:HSM_0158"/>
<dbReference type="HOGENOM" id="CLU_005965_2_3_6"/>
<dbReference type="GO" id="GO:0005524">
    <property type="term" value="F:ATP binding"/>
    <property type="evidence" value="ECO:0007669"/>
    <property type="project" value="UniProtKB-KW"/>
</dbReference>
<dbReference type="GO" id="GO:0016887">
    <property type="term" value="F:ATP hydrolysis activity"/>
    <property type="evidence" value="ECO:0007669"/>
    <property type="project" value="UniProtKB-UniRule"/>
</dbReference>
<dbReference type="GO" id="GO:0140662">
    <property type="term" value="F:ATP-dependent protein folding chaperone"/>
    <property type="evidence" value="ECO:0007669"/>
    <property type="project" value="InterPro"/>
</dbReference>
<dbReference type="GO" id="GO:0051082">
    <property type="term" value="F:unfolded protein binding"/>
    <property type="evidence" value="ECO:0007669"/>
    <property type="project" value="InterPro"/>
</dbReference>
<dbReference type="GO" id="GO:0016226">
    <property type="term" value="P:iron-sulfur cluster assembly"/>
    <property type="evidence" value="ECO:0007669"/>
    <property type="project" value="InterPro"/>
</dbReference>
<dbReference type="CDD" id="cd10236">
    <property type="entry name" value="ASKHA_NBD_HSP70_HscA"/>
    <property type="match status" value="1"/>
</dbReference>
<dbReference type="FunFam" id="3.30.420.40:FF:000046">
    <property type="entry name" value="Chaperone protein HscA"/>
    <property type="match status" value="1"/>
</dbReference>
<dbReference type="FunFam" id="2.60.34.10:FF:000005">
    <property type="entry name" value="Chaperone protein HscA homolog"/>
    <property type="match status" value="1"/>
</dbReference>
<dbReference type="FunFam" id="3.30.420.40:FF:000020">
    <property type="entry name" value="Chaperone protein HscA homolog"/>
    <property type="match status" value="1"/>
</dbReference>
<dbReference type="Gene3D" id="1.20.1270.10">
    <property type="match status" value="1"/>
</dbReference>
<dbReference type="Gene3D" id="3.30.420.40">
    <property type="match status" value="2"/>
</dbReference>
<dbReference type="Gene3D" id="3.90.640.10">
    <property type="entry name" value="Actin, Chain A, domain 4"/>
    <property type="match status" value="1"/>
</dbReference>
<dbReference type="Gene3D" id="2.60.34.10">
    <property type="entry name" value="Substrate Binding Domain Of DNAk, Chain A, domain 1"/>
    <property type="match status" value="1"/>
</dbReference>
<dbReference type="HAMAP" id="MF_00679">
    <property type="entry name" value="HscA"/>
    <property type="match status" value="1"/>
</dbReference>
<dbReference type="InterPro" id="IPR043129">
    <property type="entry name" value="ATPase_NBD"/>
</dbReference>
<dbReference type="InterPro" id="IPR018181">
    <property type="entry name" value="Heat_shock_70_CS"/>
</dbReference>
<dbReference type="InterPro" id="IPR042039">
    <property type="entry name" value="HscA_NBD"/>
</dbReference>
<dbReference type="InterPro" id="IPR029048">
    <property type="entry name" value="HSP70_C_sf"/>
</dbReference>
<dbReference type="InterPro" id="IPR029047">
    <property type="entry name" value="HSP70_peptide-bd_sf"/>
</dbReference>
<dbReference type="InterPro" id="IPR013126">
    <property type="entry name" value="Hsp_70_fam"/>
</dbReference>
<dbReference type="InterPro" id="IPR010236">
    <property type="entry name" value="ISC_FeS_clus_asmbl_HscA"/>
</dbReference>
<dbReference type="NCBIfam" id="TIGR01991">
    <property type="entry name" value="HscA"/>
    <property type="match status" value="1"/>
</dbReference>
<dbReference type="NCBIfam" id="NF003520">
    <property type="entry name" value="PRK05183.1"/>
    <property type="match status" value="1"/>
</dbReference>
<dbReference type="PANTHER" id="PTHR19375">
    <property type="entry name" value="HEAT SHOCK PROTEIN 70KDA"/>
    <property type="match status" value="1"/>
</dbReference>
<dbReference type="Pfam" id="PF00012">
    <property type="entry name" value="HSP70"/>
    <property type="match status" value="1"/>
</dbReference>
<dbReference type="PRINTS" id="PR00301">
    <property type="entry name" value="HEATSHOCK70"/>
</dbReference>
<dbReference type="SUPFAM" id="SSF53067">
    <property type="entry name" value="Actin-like ATPase domain"/>
    <property type="match status" value="2"/>
</dbReference>
<dbReference type="SUPFAM" id="SSF100934">
    <property type="entry name" value="Heat shock protein 70kD (HSP70), C-terminal subdomain"/>
    <property type="match status" value="1"/>
</dbReference>
<dbReference type="SUPFAM" id="SSF100920">
    <property type="entry name" value="Heat shock protein 70kD (HSP70), peptide-binding domain"/>
    <property type="match status" value="1"/>
</dbReference>
<dbReference type="PROSITE" id="PS00297">
    <property type="entry name" value="HSP70_1"/>
    <property type="match status" value="1"/>
</dbReference>
<dbReference type="PROSITE" id="PS00329">
    <property type="entry name" value="HSP70_2"/>
    <property type="match status" value="1"/>
</dbReference>
<dbReference type="PROSITE" id="PS01036">
    <property type="entry name" value="HSP70_3"/>
    <property type="match status" value="1"/>
</dbReference>
<proteinExistence type="inferred from homology"/>
<protein>
    <recommendedName>
        <fullName evidence="1">Chaperone protein HscA homolog</fullName>
    </recommendedName>
</protein>
<keyword id="KW-0067">ATP-binding</keyword>
<keyword id="KW-0143">Chaperone</keyword>
<keyword id="KW-0547">Nucleotide-binding</keyword>
<gene>
    <name evidence="1" type="primary">hscA</name>
    <name type="ordered locus">HSM_0158</name>
</gene>
<feature type="chain" id="PRO_1000082982" description="Chaperone protein HscA homolog">
    <location>
        <begin position="1"/>
        <end position="616"/>
    </location>
</feature>
<accession>B0UVL9</accession>
<reference key="1">
    <citation type="submission" date="2008-02" db="EMBL/GenBank/DDBJ databases">
        <title>Complete sequence of Haemophilus somnus 2336.</title>
        <authorList>
            <consortium name="US DOE Joint Genome Institute"/>
            <person name="Siddaramappa S."/>
            <person name="Duncan A.J."/>
            <person name="Challacombe J.F."/>
            <person name="Rainey D."/>
            <person name="Gillaspy A.F."/>
            <person name="Carson M."/>
            <person name="Gipson J."/>
            <person name="Gipson M."/>
            <person name="Bruce D."/>
            <person name="Detter J.C."/>
            <person name="Han C.S."/>
            <person name="Land M."/>
            <person name="Tapia R."/>
            <person name="Thompson L.S."/>
            <person name="Orvis J."/>
            <person name="Zaitshik J."/>
            <person name="Barnes G."/>
            <person name="Brettin T.S."/>
            <person name="Dyer D.W."/>
            <person name="Inzana T.J."/>
        </authorList>
    </citation>
    <scope>NUCLEOTIDE SEQUENCE [LARGE SCALE GENOMIC DNA]</scope>
    <source>
        <strain>2336</strain>
    </source>
</reference>
<sequence>MALLQIAEPGQSAAPHQHKLAVGIDLGTTNSLVAAVRSGSSEVLRDEQDRLLIPSIVHLTEDQAIVGYEAGQLASQDPQNTIISVKRLIGRSCTDVQQRYPNLPYQFNATENGLPLLKTRRGLLSPVEISAEILKKLTALAEQRLGGELTGAVITVPAYFDDAQRQSTKDAAKLAGLKVLRLLNEPTAAAIAYGLDSGQEGVIAVYDLGGGTFDVSILRLSKGVFEVLATGGDTALGGDDFDHLLAEWIVKKSTVAPQNDREKRQLIEVANQVKVALTTNDKIRISYAEQNLEIMRDEFNFLISGLVKRSLLACRRTLKDANLTPSDILEVVMVGGSTRIPYVREQVGEFFQCTPLTSIDPDKVVALGAAIQADILVGNKPDSEMLLLDVIPLSLGIETMGGLVEKIIPRNTTIPVARAQEFTTFKDGQTAMSVHVLQGEREMVTDCRSLARFTLRGIPAMVAGAARIRVTYQVDADGLLSVTAVEKSTGVQASTQVKPSYGLTDDEIANMLKSSMEHAKEDIQTRLLTEQRVDATRVIESVYSALQQDEDLLDDNELSAVKNALVSLQKLIQEEDSLAIKQGIKMLDQATQEFASRRMDKSIRRALSGQHIEHIK</sequence>
<name>HSCA_HISS2</name>
<organism>
    <name type="scientific">Histophilus somni (strain 2336)</name>
    <name type="common">Haemophilus somnus</name>
    <dbReference type="NCBI Taxonomy" id="228400"/>
    <lineage>
        <taxon>Bacteria</taxon>
        <taxon>Pseudomonadati</taxon>
        <taxon>Pseudomonadota</taxon>
        <taxon>Gammaproteobacteria</taxon>
        <taxon>Pasteurellales</taxon>
        <taxon>Pasteurellaceae</taxon>
        <taxon>Histophilus</taxon>
    </lineage>
</organism>
<comment type="function">
    <text evidence="1">Chaperone involved in the maturation of iron-sulfur cluster-containing proteins. Has a low intrinsic ATPase activity which is markedly stimulated by HscB.</text>
</comment>
<comment type="similarity">
    <text evidence="1">Belongs to the heat shock protein 70 family.</text>
</comment>
<evidence type="ECO:0000255" key="1">
    <source>
        <dbReference type="HAMAP-Rule" id="MF_00679"/>
    </source>
</evidence>